<evidence type="ECO:0000250" key="1">
    <source>
        <dbReference type="UniProtKB" id="L7NCS1"/>
    </source>
</evidence>
<evidence type="ECO:0000255" key="2"/>
<evidence type="ECO:0000255" key="3">
    <source>
        <dbReference type="PROSITE-ProRule" id="PRU00498"/>
    </source>
</evidence>
<evidence type="ECO:0000256" key="4">
    <source>
        <dbReference type="SAM" id="MobiDB-lite"/>
    </source>
</evidence>
<evidence type="ECO:0000269" key="5">
    <source>
    </source>
</evidence>
<evidence type="ECO:0000303" key="6">
    <source>
    </source>
</evidence>
<evidence type="ECO:0000305" key="7"/>
<evidence type="ECO:0000305" key="8">
    <source>
    </source>
</evidence>
<comment type="function">
    <text evidence="5">Secreted effector that contributes strongly to virulence during infection by P.capsici (PubMed:29572661). Induces cell death in the Solanaceae, including Nicotiana benthamiana (PubMed:29572661).</text>
</comment>
<comment type="subcellular location">
    <subcellularLocation>
        <location evidence="8">Secreted</location>
    </subcellularLocation>
</comment>
<comment type="induction">
    <text evidence="5">Differentially expressed during the developmental and plant infection phases.</text>
</comment>
<comment type="domain">
    <text evidence="8">Key residues/motif important for the effector activities are degenerated in most NLPs, including the nlp24 peptide consisting of the conserved region I (11-aa immunogenic part) and conserved region II (the heptapeptide GHRHDWE motif) that is important for phytotoxic activity.</text>
</comment>
<comment type="similarity">
    <text evidence="7">Belongs to the Necrosis inducing protein (NPP1) family.</text>
</comment>
<reference key="1">
    <citation type="submission" date="2017-05" db="EMBL/GenBank/DDBJ databases">
        <authorList>
            <person name="Song R."/>
            <person name="Chenine A.L."/>
            <person name="Ruprecht R.M."/>
        </authorList>
    </citation>
    <scope>NUCLEOTIDE SEQUENCE [MRNA]</scope>
    <source>
        <strain>Pc537</strain>
    </source>
</reference>
<reference key="2">
    <citation type="journal article" date="2018" name="Mol. Genet. Genomics">
        <title>Identification and functional analysis of the NLP-encoding genes from the phytopathogenic oomycete Phytophthora capsici.</title>
        <authorList>
            <person name="Chen X.R."/>
            <person name="Huang S.X."/>
            <person name="Zhang Y."/>
            <person name="Sheng G.L."/>
            <person name="Li Y.P."/>
            <person name="Zhu F."/>
        </authorList>
    </citation>
    <scope>NUCLEOTIDE SEQUENCE [MRNA]</scope>
    <scope>FUNCTION</scope>
    <scope>DOMAIN</scope>
    <scope>INDUCTION</scope>
    <source>
        <strain>Pc537</strain>
    </source>
</reference>
<organism>
    <name type="scientific">Phytophthora capsici</name>
    <dbReference type="NCBI Taxonomy" id="4784"/>
    <lineage>
        <taxon>Eukaryota</taxon>
        <taxon>Sar</taxon>
        <taxon>Stramenopiles</taxon>
        <taxon>Oomycota</taxon>
        <taxon>Peronosporales</taxon>
        <taxon>Peronosporaceae</taxon>
        <taxon>Phytophthora</taxon>
    </lineage>
</organism>
<dbReference type="EMBL" id="MF135588">
    <property type="protein sequence ID" value="AUD40034.1"/>
    <property type="molecule type" value="mRNA"/>
</dbReference>
<dbReference type="SMR" id="A0A2R2Z552"/>
<dbReference type="VEuPathDB" id="FungiDB:DVH05_022931"/>
<dbReference type="OrthoDB" id="147163at2759"/>
<dbReference type="PHI-base" id="PHI:8054"/>
<dbReference type="GO" id="GO:0005576">
    <property type="term" value="C:extracellular region"/>
    <property type="evidence" value="ECO:0007669"/>
    <property type="project" value="UniProtKB-SubCell"/>
</dbReference>
<dbReference type="InterPro" id="IPR008701">
    <property type="entry name" value="NPP1"/>
</dbReference>
<dbReference type="PANTHER" id="PTHR33657">
    <property type="entry name" value="DOMAIN PROTEIN, PUTATIVE (AFU_ORTHOLOGUE AFUA_5G00600)-RELATED"/>
    <property type="match status" value="1"/>
</dbReference>
<dbReference type="PANTHER" id="PTHR33657:SF8">
    <property type="entry name" value="DOMAIN PROTEIN, PUTATIVE (AFU_ORTHOLOGUE AFUA_5G00600)-RELATED"/>
    <property type="match status" value="1"/>
</dbReference>
<dbReference type="Pfam" id="PF05630">
    <property type="entry name" value="NPP1"/>
    <property type="match status" value="1"/>
</dbReference>
<accession>A0A2R2Z552</accession>
<keyword id="KW-0325">Glycoprotein</keyword>
<keyword id="KW-0964">Secreted</keyword>
<keyword id="KW-0732">Signal</keyword>
<keyword id="KW-0843">Virulence</keyword>
<gene>
    <name evidence="6" type="ORF">Pc107869</name>
</gene>
<sequence>MKTGFFLFAACAALVAVQAQEATNSTVKYIDYSSLKKFTRAPRTKAPPTKETTIQQSSLSGSQEQQQEQIETPAPTRVPAPTRPNPRATKAPTPAPTPAPTPAPTPAPTPAPTPAPTPDPGPWEAKWIDHDQVKPFAQPEPVTISEKAAVKYKPQIHIVNGCHPYPAVNEAGETSGGLKTKGAPSAGCKGSGWGSQVYGRSTWVRGVWAIMYSWYFPKDSPSSGLGHRHDWEHVIVWIDNPDIENPKILAVTPSAHSGYSKQVPPKADCVDGTSVKVKYESKWPVNHALDSTSEGGDFQDLIMWDQLSENARRAMNGVGWGKANTPFNDGNFLPKLDKAWPF</sequence>
<protein>
    <recommendedName>
        <fullName evidence="6">NLP effector protein Pc107869</fullName>
    </recommendedName>
    <alternativeName>
        <fullName evidence="6">Necrosis-inducing Pc107869</fullName>
    </alternativeName>
    <alternativeName>
        <fullName evidence="6">Nep1-like protein Pc107869</fullName>
    </alternativeName>
</protein>
<proteinExistence type="evidence at transcript level"/>
<name>NLP69_PHYCP</name>
<feature type="signal peptide" evidence="2">
    <location>
        <begin position="1"/>
        <end position="19"/>
    </location>
</feature>
<feature type="chain" id="PRO_5015352939" description="NLP effector protein Pc107869">
    <location>
        <begin position="20"/>
        <end position="342"/>
    </location>
</feature>
<feature type="region of interest" description="Disordered" evidence="4">
    <location>
        <begin position="41"/>
        <end position="125"/>
    </location>
</feature>
<feature type="short sequence motif" description="Hepta-peptide GHRHDWE motif" evidence="1">
    <location>
        <begin position="226"/>
        <end position="232"/>
    </location>
</feature>
<feature type="compositionally biased region" description="Low complexity" evidence="4">
    <location>
        <begin position="55"/>
        <end position="75"/>
    </location>
</feature>
<feature type="compositionally biased region" description="Pro residues" evidence="4">
    <location>
        <begin position="93"/>
        <end position="121"/>
    </location>
</feature>
<feature type="glycosylation site" description="N-linked (GlcNAc...) asparagine" evidence="3">
    <location>
        <position position="24"/>
    </location>
</feature>